<dbReference type="EMBL" id="CP001182">
    <property type="protein sequence ID" value="ACJ42628.1"/>
    <property type="molecule type" value="Genomic_DNA"/>
</dbReference>
<dbReference type="RefSeq" id="WP_000559187.1">
    <property type="nucleotide sequence ID" value="NC_011586.2"/>
</dbReference>
<dbReference type="SMR" id="B7IC15"/>
<dbReference type="KEGG" id="abn:AB57_2520"/>
<dbReference type="HOGENOM" id="CLU_007831_2_2_6"/>
<dbReference type="Proteomes" id="UP000007094">
    <property type="component" value="Chromosome"/>
</dbReference>
<dbReference type="GO" id="GO:0005829">
    <property type="term" value="C:cytosol"/>
    <property type="evidence" value="ECO:0007669"/>
    <property type="project" value="TreeGrafter"/>
</dbReference>
<dbReference type="GO" id="GO:0050660">
    <property type="term" value="F:flavin adenine dinucleotide binding"/>
    <property type="evidence" value="ECO:0007669"/>
    <property type="project" value="UniProtKB-UniRule"/>
</dbReference>
<dbReference type="GO" id="GO:0030488">
    <property type="term" value="P:tRNA methylation"/>
    <property type="evidence" value="ECO:0007669"/>
    <property type="project" value="TreeGrafter"/>
</dbReference>
<dbReference type="GO" id="GO:0002098">
    <property type="term" value="P:tRNA wobble uridine modification"/>
    <property type="evidence" value="ECO:0007669"/>
    <property type="project" value="InterPro"/>
</dbReference>
<dbReference type="FunFam" id="1.10.10.1800:FF:000001">
    <property type="entry name" value="tRNA uridine 5-carboxymethylaminomethyl modification enzyme MnmG"/>
    <property type="match status" value="1"/>
</dbReference>
<dbReference type="FunFam" id="1.10.150.570:FF:000001">
    <property type="entry name" value="tRNA uridine 5-carboxymethylaminomethyl modification enzyme MnmG"/>
    <property type="match status" value="1"/>
</dbReference>
<dbReference type="FunFam" id="3.50.50.60:FF:000002">
    <property type="entry name" value="tRNA uridine 5-carboxymethylaminomethyl modification enzyme MnmG"/>
    <property type="match status" value="1"/>
</dbReference>
<dbReference type="FunFam" id="3.50.50.60:FF:000010">
    <property type="entry name" value="tRNA uridine 5-carboxymethylaminomethyl modification enzyme MnmG"/>
    <property type="match status" value="1"/>
</dbReference>
<dbReference type="Gene3D" id="3.50.50.60">
    <property type="entry name" value="FAD/NAD(P)-binding domain"/>
    <property type="match status" value="2"/>
</dbReference>
<dbReference type="Gene3D" id="1.10.150.570">
    <property type="entry name" value="GidA associated domain, C-terminal subdomain"/>
    <property type="match status" value="1"/>
</dbReference>
<dbReference type="Gene3D" id="1.10.10.1800">
    <property type="entry name" value="tRNA uridine 5-carboxymethylaminomethyl modification enzyme MnmG/GidA"/>
    <property type="match status" value="1"/>
</dbReference>
<dbReference type="HAMAP" id="MF_00129">
    <property type="entry name" value="MnmG_GidA"/>
    <property type="match status" value="1"/>
</dbReference>
<dbReference type="InterPro" id="IPR036188">
    <property type="entry name" value="FAD/NAD-bd_sf"/>
</dbReference>
<dbReference type="InterPro" id="IPR049312">
    <property type="entry name" value="GIDA_C_N"/>
</dbReference>
<dbReference type="InterPro" id="IPR004416">
    <property type="entry name" value="MnmG"/>
</dbReference>
<dbReference type="InterPro" id="IPR002218">
    <property type="entry name" value="MnmG-rel"/>
</dbReference>
<dbReference type="InterPro" id="IPR020595">
    <property type="entry name" value="MnmG-rel_CS"/>
</dbReference>
<dbReference type="InterPro" id="IPR026904">
    <property type="entry name" value="MnmG_C"/>
</dbReference>
<dbReference type="InterPro" id="IPR047001">
    <property type="entry name" value="MnmG_C_subdom"/>
</dbReference>
<dbReference type="InterPro" id="IPR044920">
    <property type="entry name" value="MnmG_C_subdom_sf"/>
</dbReference>
<dbReference type="InterPro" id="IPR040131">
    <property type="entry name" value="MnmG_N"/>
</dbReference>
<dbReference type="NCBIfam" id="TIGR00136">
    <property type="entry name" value="mnmG_gidA"/>
    <property type="match status" value="1"/>
</dbReference>
<dbReference type="PANTHER" id="PTHR11806">
    <property type="entry name" value="GLUCOSE INHIBITED DIVISION PROTEIN A"/>
    <property type="match status" value="1"/>
</dbReference>
<dbReference type="PANTHER" id="PTHR11806:SF0">
    <property type="entry name" value="PROTEIN MTO1 HOMOLOG, MITOCHONDRIAL"/>
    <property type="match status" value="1"/>
</dbReference>
<dbReference type="Pfam" id="PF01134">
    <property type="entry name" value="GIDA"/>
    <property type="match status" value="1"/>
</dbReference>
<dbReference type="Pfam" id="PF21680">
    <property type="entry name" value="GIDA_C_1st"/>
    <property type="match status" value="1"/>
</dbReference>
<dbReference type="Pfam" id="PF13932">
    <property type="entry name" value="SAM_GIDA_C"/>
    <property type="match status" value="1"/>
</dbReference>
<dbReference type="SMART" id="SM01228">
    <property type="entry name" value="GIDA_assoc_3"/>
    <property type="match status" value="1"/>
</dbReference>
<dbReference type="SUPFAM" id="SSF51905">
    <property type="entry name" value="FAD/NAD(P)-binding domain"/>
    <property type="match status" value="1"/>
</dbReference>
<dbReference type="PROSITE" id="PS01280">
    <property type="entry name" value="GIDA_1"/>
    <property type="match status" value="1"/>
</dbReference>
<dbReference type="PROSITE" id="PS01281">
    <property type="entry name" value="GIDA_2"/>
    <property type="match status" value="1"/>
</dbReference>
<protein>
    <recommendedName>
        <fullName evidence="1">tRNA uridine 5-carboxymethylaminomethyl modification enzyme MnmG</fullName>
    </recommendedName>
    <alternativeName>
        <fullName evidence="1">Glucose-inhibited division protein A</fullName>
    </alternativeName>
</protein>
<gene>
    <name evidence="1" type="primary">mnmG</name>
    <name evidence="1" type="synonym">gidA</name>
    <name type="ordered locus">AB57_2520</name>
</gene>
<keyword id="KW-0963">Cytoplasm</keyword>
<keyword id="KW-0274">FAD</keyword>
<keyword id="KW-0285">Flavoprotein</keyword>
<keyword id="KW-0520">NAD</keyword>
<keyword id="KW-0819">tRNA processing</keyword>
<proteinExistence type="inferred from homology"/>
<reference key="1">
    <citation type="journal article" date="2008" name="J. Bacteriol.">
        <title>Comparative genome sequence analysis of multidrug-resistant Acinetobacter baumannii.</title>
        <authorList>
            <person name="Adams M.D."/>
            <person name="Goglin K."/>
            <person name="Molyneaux N."/>
            <person name="Hujer K.M."/>
            <person name="Lavender H."/>
            <person name="Jamison J.J."/>
            <person name="MacDonald I.J."/>
            <person name="Martin K.M."/>
            <person name="Russo T."/>
            <person name="Campagnari A.A."/>
            <person name="Hujer A.M."/>
            <person name="Bonomo R.A."/>
            <person name="Gill S.R."/>
        </authorList>
    </citation>
    <scope>NUCLEOTIDE SEQUENCE [LARGE SCALE GENOMIC DNA]</scope>
    <source>
        <strain>AB0057</strain>
    </source>
</reference>
<sequence>MHYPKVYDVIVIGGGHAGTEAALAAARMGRQTLLLTHNIETLGQMSCNPAIGGIGKSHLVREIDALGGAMALAADKGGIQFRILNSRKGAAVRATRAQADRVRYKAAIRETLENQANLDIFQQAADDLIVEGDTVKGVVTQMGIRFDAKTVVLTTGTFLGGVIHVGLEKSSGGRAGDPPSIALAQRLRELKLPVGRLKTGTPPRIDARSVDFSVMTPQPGDFPSPVMSFMGDVSMHPEQVNCYITHTNEKTHDIIRGGLDRSPMYTGVIEGVGPRYCPSIEDKIHRFSDKDSHQVFLEPEGLDTHELYPNGISTSLPFDVQFELVRSIRGMENAHILRPGYAIEYDYFNPQALKFTLETKAINGLYFAGQINGTTGYEEAGAQGLLAGLNAARRAWEQEEWTPKRDQAYMGVLVDDLITLGTKEPYRMFTSRAEYRLMLREDNADQRLTTIGRELGLVDDVRWAAYCEKMEAVERETSRLQHVWAAPNNPMGKKFVEMTGADLSKECSAIDLLKRPNINFGQIAELTGSEVSQQVGEQIEIAVKYEGYINRQHEDVAQLKRLEETKIPADFDYDVVSGLSREITQKLKTVRPETLAQASRIPGVTPAAVQLVMITIRKNNMTKKTA</sequence>
<organism>
    <name type="scientific">Acinetobacter baumannii (strain AB0057)</name>
    <dbReference type="NCBI Taxonomy" id="480119"/>
    <lineage>
        <taxon>Bacteria</taxon>
        <taxon>Pseudomonadati</taxon>
        <taxon>Pseudomonadota</taxon>
        <taxon>Gammaproteobacteria</taxon>
        <taxon>Moraxellales</taxon>
        <taxon>Moraxellaceae</taxon>
        <taxon>Acinetobacter</taxon>
        <taxon>Acinetobacter calcoaceticus/baumannii complex</taxon>
    </lineage>
</organism>
<comment type="function">
    <text evidence="1">NAD-binding protein involved in the addition of a carboxymethylaminomethyl (cmnm) group at the wobble position (U34) of certain tRNAs, forming tRNA-cmnm(5)s(2)U34.</text>
</comment>
<comment type="cofactor">
    <cofactor evidence="1">
        <name>FAD</name>
        <dbReference type="ChEBI" id="CHEBI:57692"/>
    </cofactor>
</comment>
<comment type="subunit">
    <text evidence="1">Homodimer. Heterotetramer of two MnmE and two MnmG subunits.</text>
</comment>
<comment type="subcellular location">
    <subcellularLocation>
        <location evidence="1">Cytoplasm</location>
    </subcellularLocation>
</comment>
<comment type="similarity">
    <text evidence="1">Belongs to the MnmG family.</text>
</comment>
<feature type="chain" id="PRO_1000117714" description="tRNA uridine 5-carboxymethylaminomethyl modification enzyme MnmG">
    <location>
        <begin position="1"/>
        <end position="626"/>
    </location>
</feature>
<feature type="binding site" evidence="1">
    <location>
        <begin position="13"/>
        <end position="18"/>
    </location>
    <ligand>
        <name>FAD</name>
        <dbReference type="ChEBI" id="CHEBI:57692"/>
    </ligand>
</feature>
<feature type="binding site" evidence="1">
    <location>
        <begin position="273"/>
        <end position="287"/>
    </location>
    <ligand>
        <name>NAD(+)</name>
        <dbReference type="ChEBI" id="CHEBI:57540"/>
    </ligand>
</feature>
<evidence type="ECO:0000255" key="1">
    <source>
        <dbReference type="HAMAP-Rule" id="MF_00129"/>
    </source>
</evidence>
<accession>B7IC15</accession>
<name>MNMG_ACIB5</name>